<protein>
    <recommendedName>
        <fullName evidence="1">Arginine biosynthesis bifunctional protein ArgJ</fullName>
    </recommendedName>
    <domain>
        <recommendedName>
            <fullName evidence="1">Glutamate N-acetyltransferase</fullName>
            <ecNumber evidence="1">2.3.1.35</ecNumber>
        </recommendedName>
        <alternativeName>
            <fullName evidence="1">Ornithine acetyltransferase</fullName>
            <shortName evidence="1">OATase</shortName>
        </alternativeName>
        <alternativeName>
            <fullName evidence="1">Ornithine transacetylase</fullName>
        </alternativeName>
    </domain>
    <domain>
        <recommendedName>
            <fullName evidence="1">Amino-acid acetyltransferase</fullName>
            <ecNumber evidence="1">2.3.1.1</ecNumber>
        </recommendedName>
        <alternativeName>
            <fullName evidence="1">N-acetylglutamate synthase</fullName>
            <shortName evidence="1">AGSase</shortName>
        </alternativeName>
    </domain>
    <component>
        <recommendedName>
            <fullName evidence="1">Arginine biosynthesis bifunctional protein ArgJ alpha chain</fullName>
        </recommendedName>
    </component>
    <component>
        <recommendedName>
            <fullName evidence="1">Arginine biosynthesis bifunctional protein ArgJ beta chain</fullName>
        </recommendedName>
    </component>
</protein>
<evidence type="ECO:0000255" key="1">
    <source>
        <dbReference type="HAMAP-Rule" id="MF_01106"/>
    </source>
</evidence>
<evidence type="ECO:0000305" key="2"/>
<comment type="function">
    <text evidence="1">Catalyzes two activities which are involved in the cyclic version of arginine biosynthesis: the synthesis of N-acetylglutamate from glutamate and acetyl-CoA as the acetyl donor, and of ornithine by transacetylation between N(2)-acetylornithine and glutamate.</text>
</comment>
<comment type="catalytic activity">
    <reaction evidence="1">
        <text>N(2)-acetyl-L-ornithine + L-glutamate = N-acetyl-L-glutamate + L-ornithine</text>
        <dbReference type="Rhea" id="RHEA:15349"/>
        <dbReference type="ChEBI" id="CHEBI:29985"/>
        <dbReference type="ChEBI" id="CHEBI:44337"/>
        <dbReference type="ChEBI" id="CHEBI:46911"/>
        <dbReference type="ChEBI" id="CHEBI:57805"/>
        <dbReference type="EC" id="2.3.1.35"/>
    </reaction>
</comment>
<comment type="catalytic activity">
    <reaction evidence="1">
        <text>L-glutamate + acetyl-CoA = N-acetyl-L-glutamate + CoA + H(+)</text>
        <dbReference type="Rhea" id="RHEA:24292"/>
        <dbReference type="ChEBI" id="CHEBI:15378"/>
        <dbReference type="ChEBI" id="CHEBI:29985"/>
        <dbReference type="ChEBI" id="CHEBI:44337"/>
        <dbReference type="ChEBI" id="CHEBI:57287"/>
        <dbReference type="ChEBI" id="CHEBI:57288"/>
        <dbReference type="EC" id="2.3.1.1"/>
    </reaction>
</comment>
<comment type="pathway">
    <text evidence="1">Amino-acid biosynthesis; L-arginine biosynthesis; L-ornithine and N-acetyl-L-glutamate from L-glutamate and N(2)-acetyl-L-ornithine (cyclic): step 1/1.</text>
</comment>
<comment type="pathway">
    <text evidence="1">Amino-acid biosynthesis; L-arginine biosynthesis; N(2)-acetyl-L-ornithine from L-glutamate: step 1/4.</text>
</comment>
<comment type="subunit">
    <text evidence="1">Heterotetramer of two alpha and two beta chains.</text>
</comment>
<comment type="subcellular location">
    <subcellularLocation>
        <location evidence="1">Cytoplasm</location>
    </subcellularLocation>
</comment>
<comment type="similarity">
    <text evidence="1">Belongs to the ArgJ family.</text>
</comment>
<comment type="sequence caution" evidence="2">
    <conflict type="erroneous initiation">
        <sequence resource="EMBL-CDS" id="AAT56340"/>
    </conflict>
    <text>Extended N-terminus.</text>
</comment>
<proteinExistence type="inferred from homology"/>
<reference key="1">
    <citation type="journal article" date="2003" name="Nature">
        <title>The genome sequence of Bacillus anthracis Ames and comparison to closely related bacteria.</title>
        <authorList>
            <person name="Read T.D."/>
            <person name="Peterson S.N."/>
            <person name="Tourasse N.J."/>
            <person name="Baillie L.W."/>
            <person name="Paulsen I.T."/>
            <person name="Nelson K.E."/>
            <person name="Tettelin H."/>
            <person name="Fouts D.E."/>
            <person name="Eisen J.A."/>
            <person name="Gill S.R."/>
            <person name="Holtzapple E.K."/>
            <person name="Okstad O.A."/>
            <person name="Helgason E."/>
            <person name="Rilstone J."/>
            <person name="Wu M."/>
            <person name="Kolonay J.F."/>
            <person name="Beanan M.J."/>
            <person name="Dodson R.J."/>
            <person name="Brinkac L.M."/>
            <person name="Gwinn M.L."/>
            <person name="DeBoy R.T."/>
            <person name="Madpu R."/>
            <person name="Daugherty S.C."/>
            <person name="Durkin A.S."/>
            <person name="Haft D.H."/>
            <person name="Nelson W.C."/>
            <person name="Peterson J.D."/>
            <person name="Pop M."/>
            <person name="Khouri H.M."/>
            <person name="Radune D."/>
            <person name="Benton J.L."/>
            <person name="Mahamoud Y."/>
            <person name="Jiang L."/>
            <person name="Hance I.R."/>
            <person name="Weidman J.F."/>
            <person name="Berry K.J."/>
            <person name="Plaut R.D."/>
            <person name="Wolf A.M."/>
            <person name="Watkins K.L."/>
            <person name="Nierman W.C."/>
            <person name="Hazen A."/>
            <person name="Cline R.T."/>
            <person name="Redmond C."/>
            <person name="Thwaite J.E."/>
            <person name="White O."/>
            <person name="Salzberg S.L."/>
            <person name="Thomason B."/>
            <person name="Friedlander A.M."/>
            <person name="Koehler T.M."/>
            <person name="Hanna P.C."/>
            <person name="Kolstoe A.-B."/>
            <person name="Fraser C.M."/>
        </authorList>
    </citation>
    <scope>NUCLEOTIDE SEQUENCE [LARGE SCALE GENOMIC DNA]</scope>
    <source>
        <strain>Ames / isolate Porton</strain>
    </source>
</reference>
<reference key="2">
    <citation type="journal article" date="2009" name="J. Bacteriol.">
        <title>The complete genome sequence of Bacillus anthracis Ames 'Ancestor'.</title>
        <authorList>
            <person name="Ravel J."/>
            <person name="Jiang L."/>
            <person name="Stanley S.T."/>
            <person name="Wilson M.R."/>
            <person name="Decker R.S."/>
            <person name="Read T.D."/>
            <person name="Worsham P."/>
            <person name="Keim P.S."/>
            <person name="Salzberg S.L."/>
            <person name="Fraser-Liggett C.M."/>
            <person name="Rasko D.A."/>
        </authorList>
    </citation>
    <scope>NUCLEOTIDE SEQUENCE [LARGE SCALE GENOMIC DNA]</scope>
    <source>
        <strain>Ames ancestor</strain>
    </source>
</reference>
<reference key="3">
    <citation type="submission" date="2004-01" db="EMBL/GenBank/DDBJ databases">
        <title>Complete genome sequence of Bacillus anthracis Sterne.</title>
        <authorList>
            <person name="Brettin T.S."/>
            <person name="Bruce D."/>
            <person name="Challacombe J.F."/>
            <person name="Gilna P."/>
            <person name="Han C."/>
            <person name="Hill K."/>
            <person name="Hitchcock P."/>
            <person name="Jackson P."/>
            <person name="Keim P."/>
            <person name="Longmire J."/>
            <person name="Lucas S."/>
            <person name="Okinaka R."/>
            <person name="Richardson P."/>
            <person name="Rubin E."/>
            <person name="Tice H."/>
        </authorList>
    </citation>
    <scope>NUCLEOTIDE SEQUENCE [LARGE SCALE GENOMIC DNA]</scope>
    <source>
        <strain>Sterne</strain>
    </source>
</reference>
<organism>
    <name type="scientific">Bacillus anthracis</name>
    <dbReference type="NCBI Taxonomy" id="1392"/>
    <lineage>
        <taxon>Bacteria</taxon>
        <taxon>Bacillati</taxon>
        <taxon>Bacillota</taxon>
        <taxon>Bacilli</taxon>
        <taxon>Bacillales</taxon>
        <taxon>Bacillaceae</taxon>
        <taxon>Bacillus</taxon>
        <taxon>Bacillus cereus group</taxon>
    </lineage>
</organism>
<dbReference type="EC" id="2.3.1.35" evidence="1"/>
<dbReference type="EC" id="2.3.1.1" evidence="1"/>
<dbReference type="EMBL" id="AE016879">
    <property type="protein sequence ID" value="AAP28072.1"/>
    <property type="molecule type" value="Genomic_DNA"/>
</dbReference>
<dbReference type="EMBL" id="AE017334">
    <property type="protein sequence ID" value="AAT33474.1"/>
    <property type="molecule type" value="Genomic_DNA"/>
</dbReference>
<dbReference type="EMBL" id="AE017225">
    <property type="protein sequence ID" value="AAT56340.1"/>
    <property type="status" value="ALT_INIT"/>
    <property type="molecule type" value="Genomic_DNA"/>
</dbReference>
<dbReference type="RefSeq" id="NP_846586.1">
    <property type="nucleotide sequence ID" value="NC_003997.3"/>
</dbReference>
<dbReference type="RefSeq" id="WP_000598413.1">
    <property type="nucleotide sequence ID" value="NZ_WXXJ01000027.1"/>
</dbReference>
<dbReference type="RefSeq" id="YP_030289.1">
    <property type="nucleotide sequence ID" value="NC_005945.1"/>
</dbReference>
<dbReference type="SMR" id="Q81M96"/>
<dbReference type="IntAct" id="Q81M96">
    <property type="interactions" value="1"/>
</dbReference>
<dbReference type="STRING" id="261594.GBAA_4354"/>
<dbReference type="MEROPS" id="T05.002"/>
<dbReference type="DNASU" id="1087579"/>
<dbReference type="GeneID" id="45024019"/>
<dbReference type="KEGG" id="ban:BA_4354"/>
<dbReference type="KEGG" id="bar:GBAA_4354"/>
<dbReference type="KEGG" id="bat:BAS4039"/>
<dbReference type="PATRIC" id="fig|198094.11.peg.4322"/>
<dbReference type="eggNOG" id="COG1364">
    <property type="taxonomic scope" value="Bacteria"/>
</dbReference>
<dbReference type="HOGENOM" id="CLU_027172_1_0_9"/>
<dbReference type="OMA" id="WGRIVMA"/>
<dbReference type="OrthoDB" id="9804242at2"/>
<dbReference type="UniPathway" id="UPA00068">
    <property type="reaction ID" value="UER00106"/>
</dbReference>
<dbReference type="UniPathway" id="UPA00068">
    <property type="reaction ID" value="UER00111"/>
</dbReference>
<dbReference type="Proteomes" id="UP000000427">
    <property type="component" value="Chromosome"/>
</dbReference>
<dbReference type="Proteomes" id="UP000000594">
    <property type="component" value="Chromosome"/>
</dbReference>
<dbReference type="GO" id="GO:0005737">
    <property type="term" value="C:cytoplasm"/>
    <property type="evidence" value="ECO:0007669"/>
    <property type="project" value="UniProtKB-SubCell"/>
</dbReference>
<dbReference type="GO" id="GO:0004358">
    <property type="term" value="F:glutamate N-acetyltransferase activity"/>
    <property type="evidence" value="ECO:0007669"/>
    <property type="project" value="UniProtKB-UniRule"/>
</dbReference>
<dbReference type="GO" id="GO:0004042">
    <property type="term" value="F:L-glutamate N-acetyltransferase activity"/>
    <property type="evidence" value="ECO:0007669"/>
    <property type="project" value="UniProtKB-UniRule"/>
</dbReference>
<dbReference type="GO" id="GO:0006526">
    <property type="term" value="P:L-arginine biosynthetic process"/>
    <property type="evidence" value="ECO:0007669"/>
    <property type="project" value="UniProtKB-UniRule"/>
</dbReference>
<dbReference type="GO" id="GO:0006592">
    <property type="term" value="P:ornithine biosynthetic process"/>
    <property type="evidence" value="ECO:0007669"/>
    <property type="project" value="TreeGrafter"/>
</dbReference>
<dbReference type="CDD" id="cd02152">
    <property type="entry name" value="OAT"/>
    <property type="match status" value="1"/>
</dbReference>
<dbReference type="FunFam" id="3.10.20.340:FF:000001">
    <property type="entry name" value="Arginine biosynthesis bifunctional protein ArgJ, chloroplastic"/>
    <property type="match status" value="1"/>
</dbReference>
<dbReference type="FunFam" id="3.60.70.12:FF:000001">
    <property type="entry name" value="Arginine biosynthesis bifunctional protein ArgJ, chloroplastic"/>
    <property type="match status" value="1"/>
</dbReference>
<dbReference type="FunFam" id="3.30.2330.10:FF:000001">
    <property type="entry name" value="Arginine biosynthesis bifunctional protein ArgJ, mitochondrial"/>
    <property type="match status" value="1"/>
</dbReference>
<dbReference type="Gene3D" id="3.30.2330.10">
    <property type="entry name" value="arginine biosynthesis bifunctional protein suprefamily"/>
    <property type="match status" value="1"/>
</dbReference>
<dbReference type="Gene3D" id="3.10.20.340">
    <property type="entry name" value="ArgJ beta chain, C-terminal domain"/>
    <property type="match status" value="1"/>
</dbReference>
<dbReference type="Gene3D" id="3.60.70.12">
    <property type="entry name" value="L-amino peptidase D-ALA esterase/amidase"/>
    <property type="match status" value="1"/>
</dbReference>
<dbReference type="HAMAP" id="MF_01106">
    <property type="entry name" value="ArgJ"/>
    <property type="match status" value="1"/>
</dbReference>
<dbReference type="InterPro" id="IPR002813">
    <property type="entry name" value="Arg_biosynth_ArgJ"/>
</dbReference>
<dbReference type="InterPro" id="IPR016117">
    <property type="entry name" value="ArgJ-like_dom_sf"/>
</dbReference>
<dbReference type="InterPro" id="IPR042195">
    <property type="entry name" value="ArgJ_beta_C"/>
</dbReference>
<dbReference type="NCBIfam" id="TIGR00120">
    <property type="entry name" value="ArgJ"/>
    <property type="match status" value="1"/>
</dbReference>
<dbReference type="NCBIfam" id="NF003802">
    <property type="entry name" value="PRK05388.1"/>
    <property type="match status" value="1"/>
</dbReference>
<dbReference type="PANTHER" id="PTHR23100">
    <property type="entry name" value="ARGININE BIOSYNTHESIS BIFUNCTIONAL PROTEIN ARGJ"/>
    <property type="match status" value="1"/>
</dbReference>
<dbReference type="PANTHER" id="PTHR23100:SF0">
    <property type="entry name" value="ARGININE BIOSYNTHESIS BIFUNCTIONAL PROTEIN ARGJ, MITOCHONDRIAL"/>
    <property type="match status" value="1"/>
</dbReference>
<dbReference type="Pfam" id="PF01960">
    <property type="entry name" value="ArgJ"/>
    <property type="match status" value="1"/>
</dbReference>
<dbReference type="SUPFAM" id="SSF56266">
    <property type="entry name" value="DmpA/ArgJ-like"/>
    <property type="match status" value="1"/>
</dbReference>
<gene>
    <name evidence="1" type="primary">argJ</name>
    <name type="ordered locus">BA_4354</name>
    <name type="ordered locus">GBAA_4354</name>
    <name type="ordered locus">BAS4039</name>
</gene>
<keyword id="KW-0012">Acyltransferase</keyword>
<keyword id="KW-0028">Amino-acid biosynthesis</keyword>
<keyword id="KW-0055">Arginine biosynthesis</keyword>
<keyword id="KW-0068">Autocatalytic cleavage</keyword>
<keyword id="KW-0963">Cytoplasm</keyword>
<keyword id="KW-0511">Multifunctional enzyme</keyword>
<keyword id="KW-1185">Reference proteome</keyword>
<keyword id="KW-0808">Transferase</keyword>
<name>ARGJ_BACAN</name>
<feature type="chain" id="PRO_0000002103" description="Arginine biosynthesis bifunctional protein ArgJ alpha chain" evidence="1">
    <location>
        <begin position="1"/>
        <end position="193"/>
    </location>
</feature>
<feature type="chain" id="PRO_0000002104" description="Arginine biosynthesis bifunctional protein ArgJ beta chain" evidence="1">
    <location>
        <begin position="194"/>
        <end position="407"/>
    </location>
</feature>
<feature type="active site" description="Nucleophile" evidence="1">
    <location>
        <position position="194"/>
    </location>
</feature>
<feature type="binding site" evidence="1">
    <location>
        <position position="157"/>
    </location>
    <ligand>
        <name>substrate</name>
    </ligand>
</feature>
<feature type="binding site" evidence="1">
    <location>
        <position position="183"/>
    </location>
    <ligand>
        <name>substrate</name>
    </ligand>
</feature>
<feature type="binding site" evidence="1">
    <location>
        <position position="194"/>
    </location>
    <ligand>
        <name>substrate</name>
    </ligand>
</feature>
<feature type="binding site" evidence="1">
    <location>
        <position position="280"/>
    </location>
    <ligand>
        <name>substrate</name>
    </ligand>
</feature>
<feature type="binding site" evidence="1">
    <location>
        <position position="402"/>
    </location>
    <ligand>
        <name>substrate</name>
    </ligand>
</feature>
<feature type="binding site" evidence="1">
    <location>
        <position position="407"/>
    </location>
    <ligand>
        <name>substrate</name>
    </ligand>
</feature>
<feature type="site" description="Involved in the stabilization of negative charge on the oxyanion by the formation of the oxyanion hole" evidence="1">
    <location>
        <position position="120"/>
    </location>
</feature>
<feature type="site" description="Involved in the stabilization of negative charge on the oxyanion by the formation of the oxyanion hole" evidence="1">
    <location>
        <position position="121"/>
    </location>
</feature>
<feature type="site" description="Cleavage; by autolysis" evidence="1">
    <location>
        <begin position="193"/>
        <end position="194"/>
    </location>
</feature>
<accession>Q81M96</accession>
<accession>Q6HTP9</accession>
<accession>Q6KMY8</accession>
<sequence length="407" mass="43740">MIKVASITKVEDGSIVTPKGFSAIGTAIGLKKGKKDLGAIVCDVPASCAAVYTTNQIQAAPLQVTKDSITTEGKLQAIIVNSGNANACTGMKGLQDAYEMRALGAEHFGLKEKYVAVASTGVIGVPLPMDIIRKGIVTLIPAKEENGAHSFSEAILTTDLITKETCYEMIIDGKKVMIAGVAKGSGMIHPNMATMLSFITTDARIEHDVLQTALSQITNHTFNQITVDGDTSTNDMVIAMASGLSETKPIDMEHADWETFVFALQKVCEDLAKKIAQDGEGATKLIEVNVLGVQTNEEAKKIAKQIVGSSLVKTAIHGEDPNWGRIISSIGQSEVAINPNTIDITLQSISVLKNSEPQTFSEEEMKERLQEDEIVINVYLHLGKETGSAWGCDLSYEYVKINACYRT</sequence>